<organism>
    <name type="scientific">Dictyostelium discoideum</name>
    <name type="common">Social amoeba</name>
    <dbReference type="NCBI Taxonomy" id="44689"/>
    <lineage>
        <taxon>Eukaryota</taxon>
        <taxon>Amoebozoa</taxon>
        <taxon>Evosea</taxon>
        <taxon>Eumycetozoa</taxon>
        <taxon>Dictyostelia</taxon>
        <taxon>Dictyosteliales</taxon>
        <taxon>Dictyosteliaceae</taxon>
        <taxon>Dictyostelium</taxon>
    </lineage>
</organism>
<feature type="chain" id="PRO_0000391394" description="ABC transporter G family member 7">
    <location>
        <begin position="1"/>
        <end position="815"/>
    </location>
</feature>
<feature type="transmembrane region" description="Helical" evidence="1">
    <location>
        <begin position="568"/>
        <end position="588"/>
    </location>
</feature>
<feature type="transmembrane region" description="Helical" evidence="1">
    <location>
        <begin position="598"/>
        <end position="618"/>
    </location>
</feature>
<feature type="transmembrane region" description="Helical" evidence="1">
    <location>
        <begin position="647"/>
        <end position="667"/>
    </location>
</feature>
<feature type="transmembrane region" description="Helical" evidence="1">
    <location>
        <begin position="675"/>
        <end position="695"/>
    </location>
</feature>
<feature type="transmembrane region" description="Helical" evidence="1">
    <location>
        <begin position="706"/>
        <end position="726"/>
    </location>
</feature>
<feature type="transmembrane region" description="Helical" evidence="1">
    <location>
        <begin position="732"/>
        <end position="752"/>
    </location>
</feature>
<feature type="transmembrane region" description="Helical" evidence="1">
    <location>
        <begin position="788"/>
        <end position="808"/>
    </location>
</feature>
<feature type="domain" description="ABC transporter" evidence="2">
    <location>
        <begin position="242"/>
        <end position="485"/>
    </location>
</feature>
<feature type="domain" description="ABC transmembrane type-2">
    <location>
        <begin position="562"/>
        <end position="810"/>
    </location>
</feature>
<feature type="region of interest" description="Disordered" evidence="3">
    <location>
        <begin position="81"/>
        <end position="141"/>
    </location>
</feature>
<feature type="region of interest" description="Disordered" evidence="3">
    <location>
        <begin position="177"/>
        <end position="249"/>
    </location>
</feature>
<feature type="coiled-coil region" evidence="1">
    <location>
        <begin position="164"/>
        <end position="199"/>
    </location>
</feature>
<feature type="compositionally biased region" description="Low complexity" evidence="3">
    <location>
        <begin position="194"/>
        <end position="210"/>
    </location>
</feature>
<feature type="compositionally biased region" description="Polar residues" evidence="3">
    <location>
        <begin position="211"/>
        <end position="248"/>
    </location>
</feature>
<feature type="binding site" evidence="2">
    <location>
        <begin position="274"/>
        <end position="281"/>
    </location>
    <ligand>
        <name>ATP</name>
        <dbReference type="ChEBI" id="CHEBI:30616"/>
    </ligand>
</feature>
<proteinExistence type="inferred from homology"/>
<comment type="subcellular location">
    <subcellularLocation>
        <location evidence="4">Membrane</location>
        <topology evidence="4">Multi-pass membrane protein</topology>
    </subcellularLocation>
</comment>
<comment type="similarity">
    <text evidence="4">Belongs to the ABC transporter superfamily. ABCG family.</text>
</comment>
<protein>
    <recommendedName>
        <fullName>ABC transporter G family member 7</fullName>
    </recommendedName>
    <alternativeName>
        <fullName>ABC transporter ABCG.7</fullName>
    </alternativeName>
</protein>
<gene>
    <name type="primary">abcG7</name>
    <name type="ORF">DDB_G0289655</name>
</gene>
<reference key="1">
    <citation type="journal article" date="2002" name="Eukaryot. Cell">
        <title>Evolutionary analyses of ABC transporters of Dictyostelium discoideum.</title>
        <authorList>
            <person name="Anjard C."/>
            <person name="Loomis W.F."/>
        </authorList>
    </citation>
    <scope>NUCLEOTIDE SEQUENCE [GENOMIC DNA]</scope>
    <scope>NOMENCLATURE</scope>
    <source>
        <strain>AX4</strain>
    </source>
</reference>
<reference key="2">
    <citation type="journal article" date="2005" name="Nature">
        <title>The genome of the social amoeba Dictyostelium discoideum.</title>
        <authorList>
            <person name="Eichinger L."/>
            <person name="Pachebat J.A."/>
            <person name="Gloeckner G."/>
            <person name="Rajandream M.A."/>
            <person name="Sucgang R."/>
            <person name="Berriman M."/>
            <person name="Song J."/>
            <person name="Olsen R."/>
            <person name="Szafranski K."/>
            <person name="Xu Q."/>
            <person name="Tunggal B."/>
            <person name="Kummerfeld S."/>
            <person name="Madera M."/>
            <person name="Konfortov B.A."/>
            <person name="Rivero F."/>
            <person name="Bankier A.T."/>
            <person name="Lehmann R."/>
            <person name="Hamlin N."/>
            <person name="Davies R."/>
            <person name="Gaudet P."/>
            <person name="Fey P."/>
            <person name="Pilcher K."/>
            <person name="Chen G."/>
            <person name="Saunders D."/>
            <person name="Sodergren E.J."/>
            <person name="Davis P."/>
            <person name="Kerhornou A."/>
            <person name="Nie X."/>
            <person name="Hall N."/>
            <person name="Anjard C."/>
            <person name="Hemphill L."/>
            <person name="Bason N."/>
            <person name="Farbrother P."/>
            <person name="Desany B."/>
            <person name="Just E."/>
            <person name="Morio T."/>
            <person name="Rost R."/>
            <person name="Churcher C.M."/>
            <person name="Cooper J."/>
            <person name="Haydock S."/>
            <person name="van Driessche N."/>
            <person name="Cronin A."/>
            <person name="Goodhead I."/>
            <person name="Muzny D.M."/>
            <person name="Mourier T."/>
            <person name="Pain A."/>
            <person name="Lu M."/>
            <person name="Harper D."/>
            <person name="Lindsay R."/>
            <person name="Hauser H."/>
            <person name="James K.D."/>
            <person name="Quiles M."/>
            <person name="Madan Babu M."/>
            <person name="Saito T."/>
            <person name="Buchrieser C."/>
            <person name="Wardroper A."/>
            <person name="Felder M."/>
            <person name="Thangavelu M."/>
            <person name="Johnson D."/>
            <person name="Knights A."/>
            <person name="Loulseged H."/>
            <person name="Mungall K.L."/>
            <person name="Oliver K."/>
            <person name="Price C."/>
            <person name="Quail M.A."/>
            <person name="Urushihara H."/>
            <person name="Hernandez J."/>
            <person name="Rabbinowitsch E."/>
            <person name="Steffen D."/>
            <person name="Sanders M."/>
            <person name="Ma J."/>
            <person name="Kohara Y."/>
            <person name="Sharp S."/>
            <person name="Simmonds M.N."/>
            <person name="Spiegler S."/>
            <person name="Tivey A."/>
            <person name="Sugano S."/>
            <person name="White B."/>
            <person name="Walker D."/>
            <person name="Woodward J.R."/>
            <person name="Winckler T."/>
            <person name="Tanaka Y."/>
            <person name="Shaulsky G."/>
            <person name="Schleicher M."/>
            <person name="Weinstock G.M."/>
            <person name="Rosenthal A."/>
            <person name="Cox E.C."/>
            <person name="Chisholm R.L."/>
            <person name="Gibbs R.A."/>
            <person name="Loomis W.F."/>
            <person name="Platzer M."/>
            <person name="Kay R.R."/>
            <person name="Williams J.G."/>
            <person name="Dear P.H."/>
            <person name="Noegel A.A."/>
            <person name="Barrell B.G."/>
            <person name="Kuspa A."/>
        </authorList>
    </citation>
    <scope>NUCLEOTIDE SEQUENCE [LARGE SCALE GENOMIC DNA]</scope>
    <source>
        <strain>AX4</strain>
    </source>
</reference>
<dbReference type="EMBL" id="AF482386">
    <property type="protein sequence ID" value="AAL91492.1"/>
    <property type="molecule type" value="Genomic_DNA"/>
</dbReference>
<dbReference type="EMBL" id="AAFI02000148">
    <property type="protein sequence ID" value="EAL62539.1"/>
    <property type="molecule type" value="Genomic_DNA"/>
</dbReference>
<dbReference type="RefSeq" id="XP_636042.1">
    <property type="nucleotide sequence ID" value="XM_630950.1"/>
</dbReference>
<dbReference type="SMR" id="Q8T686"/>
<dbReference type="FunCoup" id="Q8T686">
    <property type="interactions" value="5"/>
</dbReference>
<dbReference type="STRING" id="44689.Q8T686"/>
<dbReference type="PaxDb" id="44689-DDB0191231"/>
<dbReference type="EnsemblProtists" id="EAL62539">
    <property type="protein sequence ID" value="EAL62539"/>
    <property type="gene ID" value="DDB_G0289655"/>
</dbReference>
<dbReference type="GeneID" id="8627252"/>
<dbReference type="KEGG" id="ddi:DDB_G0289655"/>
<dbReference type="dictyBase" id="DDB_G0289655">
    <property type="gene designation" value="abcG7"/>
</dbReference>
<dbReference type="VEuPathDB" id="AmoebaDB:DDB_G0289655"/>
<dbReference type="eggNOG" id="KOG0065">
    <property type="taxonomic scope" value="Eukaryota"/>
</dbReference>
<dbReference type="HOGENOM" id="CLU_000604_57_8_1"/>
<dbReference type="InParanoid" id="Q8T686"/>
<dbReference type="OMA" id="VEEIPGC"/>
<dbReference type="PhylomeDB" id="Q8T686"/>
<dbReference type="Reactome" id="R-DDI-1369062">
    <property type="pathway name" value="ABC transporters in lipid homeostasis"/>
</dbReference>
<dbReference type="Reactome" id="R-DDI-1660661">
    <property type="pathway name" value="Sphingolipid de novo biosynthesis"/>
</dbReference>
<dbReference type="Reactome" id="R-DDI-189451">
    <property type="pathway name" value="Heme biosynthesis"/>
</dbReference>
<dbReference type="Reactome" id="R-DDI-189483">
    <property type="pathway name" value="Heme degradation"/>
</dbReference>
<dbReference type="Reactome" id="R-DDI-917937">
    <property type="pathway name" value="Iron uptake and transport"/>
</dbReference>
<dbReference type="Reactome" id="R-DDI-9753281">
    <property type="pathway name" value="Paracetamol ADME"/>
</dbReference>
<dbReference type="Reactome" id="R-DDI-9793528">
    <property type="pathway name" value="Ciprofloxacin ADME"/>
</dbReference>
<dbReference type="PRO" id="PR:Q8T686"/>
<dbReference type="Proteomes" id="UP000002195">
    <property type="component" value="Chromosome 5"/>
</dbReference>
<dbReference type="GO" id="GO:0043190">
    <property type="term" value="C:ATP-binding cassette (ABC) transporter complex"/>
    <property type="evidence" value="ECO:0000317"/>
    <property type="project" value="dictyBase"/>
</dbReference>
<dbReference type="GO" id="GO:0016020">
    <property type="term" value="C:membrane"/>
    <property type="evidence" value="ECO:0000318"/>
    <property type="project" value="GO_Central"/>
</dbReference>
<dbReference type="GO" id="GO:0140359">
    <property type="term" value="F:ABC-type transporter activity"/>
    <property type="evidence" value="ECO:0007669"/>
    <property type="project" value="InterPro"/>
</dbReference>
<dbReference type="GO" id="GO:0005524">
    <property type="term" value="F:ATP binding"/>
    <property type="evidence" value="ECO:0007669"/>
    <property type="project" value="UniProtKB-KW"/>
</dbReference>
<dbReference type="GO" id="GO:0016887">
    <property type="term" value="F:ATP hydrolysis activity"/>
    <property type="evidence" value="ECO:0007669"/>
    <property type="project" value="InterPro"/>
</dbReference>
<dbReference type="GO" id="GO:0042626">
    <property type="term" value="F:ATPase-coupled transmembrane transporter activity"/>
    <property type="evidence" value="ECO:0000318"/>
    <property type="project" value="GO_Central"/>
</dbReference>
<dbReference type="GO" id="GO:0031152">
    <property type="term" value="P:aggregation involved in sorocarp development"/>
    <property type="evidence" value="ECO:0000315"/>
    <property type="project" value="dictyBase"/>
</dbReference>
<dbReference type="GO" id="GO:0031288">
    <property type="term" value="P:sorocarp morphogenesis"/>
    <property type="evidence" value="ECO:0000315"/>
    <property type="project" value="dictyBase"/>
</dbReference>
<dbReference type="GO" id="GO:0055085">
    <property type="term" value="P:transmembrane transport"/>
    <property type="evidence" value="ECO:0000318"/>
    <property type="project" value="GO_Central"/>
</dbReference>
<dbReference type="CDD" id="cd03213">
    <property type="entry name" value="ABCG_EPDR"/>
    <property type="match status" value="1"/>
</dbReference>
<dbReference type="FunFam" id="3.40.50.300:FF:002300">
    <property type="entry name" value="ABC transporter G family protein"/>
    <property type="match status" value="1"/>
</dbReference>
<dbReference type="Gene3D" id="3.40.50.300">
    <property type="entry name" value="P-loop containing nucleotide triphosphate hydrolases"/>
    <property type="match status" value="1"/>
</dbReference>
<dbReference type="InterPro" id="IPR003593">
    <property type="entry name" value="AAA+_ATPase"/>
</dbReference>
<dbReference type="InterPro" id="IPR013525">
    <property type="entry name" value="ABC2_TM"/>
</dbReference>
<dbReference type="InterPro" id="IPR003439">
    <property type="entry name" value="ABC_transporter-like_ATP-bd"/>
</dbReference>
<dbReference type="InterPro" id="IPR017871">
    <property type="entry name" value="ABC_transporter-like_CS"/>
</dbReference>
<dbReference type="InterPro" id="IPR050352">
    <property type="entry name" value="ABCG_transporters"/>
</dbReference>
<dbReference type="InterPro" id="IPR027417">
    <property type="entry name" value="P-loop_NTPase"/>
</dbReference>
<dbReference type="PANTHER" id="PTHR48041">
    <property type="entry name" value="ABC TRANSPORTER G FAMILY MEMBER 28"/>
    <property type="match status" value="1"/>
</dbReference>
<dbReference type="PANTHER" id="PTHR48041:SF96">
    <property type="entry name" value="ABC TRANSPORTER G FAMILY MEMBER 7"/>
    <property type="match status" value="1"/>
</dbReference>
<dbReference type="Pfam" id="PF01061">
    <property type="entry name" value="ABC2_membrane"/>
    <property type="match status" value="1"/>
</dbReference>
<dbReference type="Pfam" id="PF00005">
    <property type="entry name" value="ABC_tran"/>
    <property type="match status" value="1"/>
</dbReference>
<dbReference type="SMART" id="SM00382">
    <property type="entry name" value="AAA"/>
    <property type="match status" value="1"/>
</dbReference>
<dbReference type="SUPFAM" id="SSF52540">
    <property type="entry name" value="P-loop containing nucleoside triphosphate hydrolases"/>
    <property type="match status" value="1"/>
</dbReference>
<dbReference type="PROSITE" id="PS00211">
    <property type="entry name" value="ABC_TRANSPORTER_1"/>
    <property type="match status" value="1"/>
</dbReference>
<dbReference type="PROSITE" id="PS50893">
    <property type="entry name" value="ABC_TRANSPORTER_2"/>
    <property type="match status" value="1"/>
</dbReference>
<keyword id="KW-0067">ATP-binding</keyword>
<keyword id="KW-0175">Coiled coil</keyword>
<keyword id="KW-0472">Membrane</keyword>
<keyword id="KW-0547">Nucleotide-binding</keyword>
<keyword id="KW-1185">Reference proteome</keyword>
<keyword id="KW-0812">Transmembrane</keyword>
<keyword id="KW-1133">Transmembrane helix</keyword>
<keyword id="KW-0813">Transport</keyword>
<accession>Q8T686</accession>
<accession>Q54H76</accession>
<name>ABCG7_DICDI</name>
<sequence>MEVISINNTNCNNINNNIDNTNIDTNSIHNKNNIDNNIDNNNIDNNSIGNNNNNIDNNNNNIANNNINNINNIDNNIDNNNNIDNNNNKNNSNNYNNIDNNNNNNNNNNNNNNNNNNIDNYNLVNNNNNNNNNSEISTPNFPYNNNNLTNLNSDNNIGVQVIFENISYKTENRNYKKQIKDEKKRKKKLEMERSNSSNSNSSYDVESSASGLQTPQQSRSSILPTNSLNISKIDQSMNPQQTRSTTNGKIEKEITILSNVSGIIEKSEMVGLFGPSGSGKSTLLDILANRKSTGTISGKILVNGKEIGDAYKKYCSYVTQDEILLQTSTVEETLKFHADLRLPGLSDQDKWKVVEQVIKDIGLTKKSKSKIGGILPGGMIVKGLSGGEKKRVSIGCALVTNPSLLFLDEPTSGLDSLNALKVMKVLMNLTVIKGVTVICSIHQPRPEIYHLFNKIMIMLKGRMIYCGNDVLNYLSSLPNQYQCPNYTNPADFILDTCHEISECDHYEEICESWETNWRDNMLAVSRIQPFNRSIEPNKSCSLLYQYKILLNRNFKDFFRNSTQYITRLSGGFMIGLLFSACFGTLSPSQEDVLKISGILFFLIAVLNLIPFTCITLFLSNREVFNSERASKIYHSLPFYLSTITTEAFIQFLVSLIVSLLVYTINHLRWNFSSFFITYFILYLINLLSDLYIIAISNITGKSDLTFIYGTTISITFLLFMGHLVPVKQLPKSFGWIHWLNPLYYGYATVMVAQFKDYPLECPNDFCQFPNGNDVLKFYNLEDWTLQKGIGIIILWICFFFVSGYWAISKLNKEKR</sequence>
<evidence type="ECO:0000255" key="1"/>
<evidence type="ECO:0000255" key="2">
    <source>
        <dbReference type="PROSITE-ProRule" id="PRU00434"/>
    </source>
</evidence>
<evidence type="ECO:0000256" key="3">
    <source>
        <dbReference type="SAM" id="MobiDB-lite"/>
    </source>
</evidence>
<evidence type="ECO:0000305" key="4"/>